<sequence length="479" mass="53296">MAQHTVYFPDAFLTQMREAMPSTLSFDDFLAACQRPLRRSIRVNTLKISVADFLQLTAPYGWTLTPIPWCEEGFWIERDNEDALPLGSTAEHLSGLFYIQEASSMLPVAALFADGNAPQRVMDVAAAPGSKTTQIAARMNNEGAILANEFSASRVKVLHANISRCGISNVALTHFDGRVFGVAVPEMFDAILLDAPCSGEGVVRKDPDALKNWSPESNQEIAATQRELIDSAFHALRPGGTLVYSTCTLNREENEAVCMWLKETYPDAVEFLPLGELFPAANKALTEEGFLHVFPQIYDCEGFFVARLRKTQAIPALPAPKYKVGNFPFSPVKDREAGQIRQAAAGVGLNWDENLRLWQRDKELWLFPVGIEALIGKVRFSRLGIKLAETHNKGYRWQHEAVIALATPDNVNAFELTPQEAEEWYRGRDVYPQAAPVADDVLVTFQHQPIGLAKRIGSRLKNSYPRELVRDGKLFTSNA</sequence>
<proteinExistence type="inferred from homology"/>
<accession>A8A133</accession>
<dbReference type="EC" id="2.1.1.178" evidence="1"/>
<dbReference type="EMBL" id="CP000802">
    <property type="protein sequence ID" value="ABV06237.1"/>
    <property type="status" value="ALT_INIT"/>
    <property type="molecule type" value="Genomic_DNA"/>
</dbReference>
<dbReference type="RefSeq" id="WP_001338165.1">
    <property type="nucleotide sequence ID" value="NC_009800.1"/>
</dbReference>
<dbReference type="SMR" id="A8A133"/>
<dbReference type="KEGG" id="ecx:EcHS_A1926"/>
<dbReference type="HOGENOM" id="CLU_005316_6_2_6"/>
<dbReference type="GO" id="GO:0005737">
    <property type="term" value="C:cytoplasm"/>
    <property type="evidence" value="ECO:0007669"/>
    <property type="project" value="UniProtKB-SubCell"/>
</dbReference>
<dbReference type="GO" id="GO:0003723">
    <property type="term" value="F:RNA binding"/>
    <property type="evidence" value="ECO:0007669"/>
    <property type="project" value="UniProtKB-KW"/>
</dbReference>
<dbReference type="GO" id="GO:0009383">
    <property type="term" value="F:rRNA (cytosine-C5-)-methyltransferase activity"/>
    <property type="evidence" value="ECO:0007669"/>
    <property type="project" value="TreeGrafter"/>
</dbReference>
<dbReference type="GO" id="GO:0070475">
    <property type="term" value="P:rRNA base methylation"/>
    <property type="evidence" value="ECO:0007669"/>
    <property type="project" value="TreeGrafter"/>
</dbReference>
<dbReference type="CDD" id="cd02440">
    <property type="entry name" value="AdoMet_MTases"/>
    <property type="match status" value="1"/>
</dbReference>
<dbReference type="FunFam" id="3.10.450.720:FF:000001">
    <property type="entry name" value="Ribosomal RNA small subunit methyltransferase F"/>
    <property type="match status" value="1"/>
</dbReference>
<dbReference type="FunFam" id="3.40.50.150:FF:000079">
    <property type="entry name" value="Ribosomal RNA small subunit methyltransferase F"/>
    <property type="match status" value="1"/>
</dbReference>
<dbReference type="Gene3D" id="3.10.450.720">
    <property type="match status" value="1"/>
</dbReference>
<dbReference type="Gene3D" id="3.40.50.150">
    <property type="entry name" value="Vaccinia Virus protein VP39"/>
    <property type="match status" value="1"/>
</dbReference>
<dbReference type="HAMAP" id="MF_01579">
    <property type="entry name" value="16SrRNA_methyltr_F"/>
    <property type="match status" value="1"/>
</dbReference>
<dbReference type="InterPro" id="IPR031341">
    <property type="entry name" value="Methyltr_RsmF_N"/>
</dbReference>
<dbReference type="InterPro" id="IPR049560">
    <property type="entry name" value="MeTrfase_RsmB-F_NOP2_cat"/>
</dbReference>
<dbReference type="InterPro" id="IPR001678">
    <property type="entry name" value="MeTrfase_RsmB-F_NOP2_dom"/>
</dbReference>
<dbReference type="InterPro" id="IPR027391">
    <property type="entry name" value="Nol1_Nop2_Fmu_2"/>
</dbReference>
<dbReference type="InterPro" id="IPR011023">
    <property type="entry name" value="Nop2p"/>
</dbReference>
<dbReference type="InterPro" id="IPR023267">
    <property type="entry name" value="RCMT"/>
</dbReference>
<dbReference type="InterPro" id="IPR023545">
    <property type="entry name" value="rRNA_ssu_MeTfrase_F"/>
</dbReference>
<dbReference type="InterPro" id="IPR018314">
    <property type="entry name" value="RsmB/NOL1/NOP2-like_CS"/>
</dbReference>
<dbReference type="InterPro" id="IPR029063">
    <property type="entry name" value="SAM-dependent_MTases_sf"/>
</dbReference>
<dbReference type="InterPro" id="IPR048457">
    <property type="entry name" value="YebU_pre-PUA_dom"/>
</dbReference>
<dbReference type="NCBIfam" id="TIGR00446">
    <property type="entry name" value="nop2p"/>
    <property type="match status" value="1"/>
</dbReference>
<dbReference type="NCBIfam" id="NF008898">
    <property type="entry name" value="PRK11933.1"/>
    <property type="match status" value="1"/>
</dbReference>
<dbReference type="PANTHER" id="PTHR22807:SF30">
    <property type="entry name" value="28S RRNA (CYTOSINE(4447)-C(5))-METHYLTRANSFERASE-RELATED"/>
    <property type="match status" value="1"/>
</dbReference>
<dbReference type="PANTHER" id="PTHR22807">
    <property type="entry name" value="NOP2 YEAST -RELATED NOL1/NOP2/FMU SUN DOMAIN-CONTAINING"/>
    <property type="match status" value="1"/>
</dbReference>
<dbReference type="Pfam" id="PF01189">
    <property type="entry name" value="Methyltr_RsmB-F"/>
    <property type="match status" value="1"/>
</dbReference>
<dbReference type="Pfam" id="PF17125">
    <property type="entry name" value="Methyltr_RsmF_N"/>
    <property type="match status" value="1"/>
</dbReference>
<dbReference type="Pfam" id="PF13636">
    <property type="entry name" value="Methyltranf_PUA"/>
    <property type="match status" value="1"/>
</dbReference>
<dbReference type="Pfam" id="PF21150">
    <property type="entry name" value="YebU_pre-PUA_dom"/>
    <property type="match status" value="1"/>
</dbReference>
<dbReference type="PRINTS" id="PR02008">
    <property type="entry name" value="RCMTFAMILY"/>
</dbReference>
<dbReference type="SUPFAM" id="SSF53335">
    <property type="entry name" value="S-adenosyl-L-methionine-dependent methyltransferases"/>
    <property type="match status" value="1"/>
</dbReference>
<dbReference type="PROSITE" id="PS01153">
    <property type="entry name" value="NOL1_NOP2_SUN"/>
    <property type="match status" value="1"/>
</dbReference>
<dbReference type="PROSITE" id="PS51686">
    <property type="entry name" value="SAM_MT_RSMB_NOP"/>
    <property type="match status" value="1"/>
</dbReference>
<organism>
    <name type="scientific">Escherichia coli O9:H4 (strain HS)</name>
    <dbReference type="NCBI Taxonomy" id="331112"/>
    <lineage>
        <taxon>Bacteria</taxon>
        <taxon>Pseudomonadati</taxon>
        <taxon>Pseudomonadota</taxon>
        <taxon>Gammaproteobacteria</taxon>
        <taxon>Enterobacterales</taxon>
        <taxon>Enterobacteriaceae</taxon>
        <taxon>Escherichia</taxon>
    </lineage>
</organism>
<reference key="1">
    <citation type="journal article" date="2008" name="J. Bacteriol.">
        <title>The pangenome structure of Escherichia coli: comparative genomic analysis of E. coli commensal and pathogenic isolates.</title>
        <authorList>
            <person name="Rasko D.A."/>
            <person name="Rosovitz M.J."/>
            <person name="Myers G.S.A."/>
            <person name="Mongodin E.F."/>
            <person name="Fricke W.F."/>
            <person name="Gajer P."/>
            <person name="Crabtree J."/>
            <person name="Sebaihia M."/>
            <person name="Thomson N.R."/>
            <person name="Chaudhuri R."/>
            <person name="Henderson I.R."/>
            <person name="Sperandio V."/>
            <person name="Ravel J."/>
        </authorList>
    </citation>
    <scope>NUCLEOTIDE SEQUENCE [LARGE SCALE GENOMIC DNA]</scope>
    <source>
        <strain>HS</strain>
    </source>
</reference>
<evidence type="ECO:0000255" key="1">
    <source>
        <dbReference type="HAMAP-Rule" id="MF_01579"/>
    </source>
</evidence>
<evidence type="ECO:0000305" key="2"/>
<comment type="function">
    <text evidence="1">Specifically methylates the cytosine at position 1407 (m5C1407) of 16S rRNA.</text>
</comment>
<comment type="catalytic activity">
    <reaction evidence="1">
        <text>cytidine(1407) in 16S rRNA + S-adenosyl-L-methionine = 5-methylcytidine(1407) in 16S rRNA + S-adenosyl-L-homocysteine + H(+)</text>
        <dbReference type="Rhea" id="RHEA:42756"/>
        <dbReference type="Rhea" id="RHEA-COMP:10223"/>
        <dbReference type="Rhea" id="RHEA-COMP:10224"/>
        <dbReference type="ChEBI" id="CHEBI:15378"/>
        <dbReference type="ChEBI" id="CHEBI:57856"/>
        <dbReference type="ChEBI" id="CHEBI:59789"/>
        <dbReference type="ChEBI" id="CHEBI:74483"/>
        <dbReference type="ChEBI" id="CHEBI:82748"/>
        <dbReference type="EC" id="2.1.1.178"/>
    </reaction>
</comment>
<comment type="subcellular location">
    <subcellularLocation>
        <location evidence="1">Cytoplasm</location>
    </subcellularLocation>
</comment>
<comment type="similarity">
    <text evidence="1">Belongs to the class I-like SAM-binding methyltransferase superfamily. RsmB/NOP family.</text>
</comment>
<comment type="sequence caution" evidence="2">
    <conflict type="erroneous initiation">
        <sequence resource="EMBL-CDS" id="ABV06237"/>
    </conflict>
</comment>
<keyword id="KW-0963">Cytoplasm</keyword>
<keyword id="KW-0489">Methyltransferase</keyword>
<keyword id="KW-0694">RNA-binding</keyword>
<keyword id="KW-0698">rRNA processing</keyword>
<keyword id="KW-0949">S-adenosyl-L-methionine</keyword>
<keyword id="KW-0808">Transferase</keyword>
<protein>
    <recommendedName>
        <fullName evidence="1">Ribosomal RNA small subunit methyltransferase F</fullName>
        <ecNumber evidence="1">2.1.1.178</ecNumber>
    </recommendedName>
    <alternativeName>
        <fullName evidence="1">16S rRNA m5C1407 methyltransferase</fullName>
    </alternativeName>
    <alternativeName>
        <fullName evidence="1">rRNA (cytosine-C(5)-)-methyltransferase RsmF</fullName>
    </alternativeName>
</protein>
<name>RSMF_ECOHS</name>
<feature type="chain" id="PRO_0000382571" description="Ribosomal RNA small subunit methyltransferase F">
    <location>
        <begin position="1"/>
        <end position="479"/>
    </location>
</feature>
<feature type="active site" description="Nucleophile" evidence="1">
    <location>
        <position position="247"/>
    </location>
</feature>
<feature type="binding site" evidence="1">
    <location>
        <begin position="125"/>
        <end position="131"/>
    </location>
    <ligand>
        <name>S-adenosyl-L-methionine</name>
        <dbReference type="ChEBI" id="CHEBI:59789"/>
    </ligand>
</feature>
<feature type="binding site" evidence="1">
    <location>
        <position position="149"/>
    </location>
    <ligand>
        <name>S-adenosyl-L-methionine</name>
        <dbReference type="ChEBI" id="CHEBI:59789"/>
    </ligand>
</feature>
<feature type="binding site" evidence="1">
    <location>
        <position position="176"/>
    </location>
    <ligand>
        <name>S-adenosyl-L-methionine</name>
        <dbReference type="ChEBI" id="CHEBI:59789"/>
    </ligand>
</feature>
<feature type="binding site" evidence="1">
    <location>
        <position position="194"/>
    </location>
    <ligand>
        <name>S-adenosyl-L-methionine</name>
        <dbReference type="ChEBI" id="CHEBI:59789"/>
    </ligand>
</feature>
<gene>
    <name evidence="1" type="primary">rsmF</name>
    <name type="ordered locus">EcHS_A1926</name>
</gene>